<accession>Q9JHT5</accession>
<name>AMMR1_MOUSE</name>
<gene>
    <name type="primary">Ammecr1</name>
</gene>
<comment type="subcellular location">
    <subcellularLocation>
        <location evidence="1">Nucleus</location>
    </subcellularLocation>
</comment>
<feature type="chain" id="PRO_0000142367" description="Nuclear protein AMMECR1">
    <location>
        <begin position="1"/>
        <end position="344"/>
    </location>
</feature>
<feature type="domain" description="AMMECR1" evidence="2">
    <location>
        <begin position="130"/>
        <end position="324"/>
    </location>
</feature>
<feature type="region of interest" description="Disordered" evidence="3">
    <location>
        <begin position="1"/>
        <end position="39"/>
    </location>
</feature>
<feature type="compositionally biased region" description="Low complexity" evidence="3">
    <location>
        <begin position="28"/>
        <end position="37"/>
    </location>
</feature>
<feature type="modified residue" description="Phosphoserine" evidence="1">
    <location>
        <position position="16"/>
    </location>
</feature>
<organism>
    <name type="scientific">Mus musculus</name>
    <name type="common">Mouse</name>
    <dbReference type="NCBI Taxonomy" id="10090"/>
    <lineage>
        <taxon>Eukaryota</taxon>
        <taxon>Metazoa</taxon>
        <taxon>Chordata</taxon>
        <taxon>Craniata</taxon>
        <taxon>Vertebrata</taxon>
        <taxon>Euteleostomi</taxon>
        <taxon>Mammalia</taxon>
        <taxon>Eutheria</taxon>
        <taxon>Euarchontoglires</taxon>
        <taxon>Glires</taxon>
        <taxon>Rodentia</taxon>
        <taxon>Myomorpha</taxon>
        <taxon>Muroidea</taxon>
        <taxon>Muridae</taxon>
        <taxon>Murinae</taxon>
        <taxon>Mus</taxon>
        <taxon>Mus</taxon>
    </lineage>
</organism>
<reference key="1">
    <citation type="journal article" date="2000" name="Cytogenet. Cell Genet.">
        <title>Identification and characterization of mouse orthologs of the AMMECR1 and FACL4 genes deleted in AMME syndrome: orthology of Xq22.3 and MmuXF1-F3.</title>
        <authorList>
            <person name="Vitelli F."/>
            <person name="Meloni I."/>
            <person name="Fineschi S."/>
            <person name="Favara F."/>
            <person name="Tiziana Storlazzi C."/>
            <person name="Rocchi M."/>
            <person name="Renieri A."/>
        </authorList>
    </citation>
    <scope>NUCLEOTIDE SEQUENCE [MRNA]</scope>
    <source>
        <tissue>Embryo</tissue>
    </source>
</reference>
<reference key="2">
    <citation type="journal article" date="2005" name="Science">
        <title>The transcriptional landscape of the mammalian genome.</title>
        <authorList>
            <person name="Carninci P."/>
            <person name="Kasukawa T."/>
            <person name="Katayama S."/>
            <person name="Gough J."/>
            <person name="Frith M.C."/>
            <person name="Maeda N."/>
            <person name="Oyama R."/>
            <person name="Ravasi T."/>
            <person name="Lenhard B."/>
            <person name="Wells C."/>
            <person name="Kodzius R."/>
            <person name="Shimokawa K."/>
            <person name="Bajic V.B."/>
            <person name="Brenner S.E."/>
            <person name="Batalov S."/>
            <person name="Forrest A.R."/>
            <person name="Zavolan M."/>
            <person name="Davis M.J."/>
            <person name="Wilming L.G."/>
            <person name="Aidinis V."/>
            <person name="Allen J.E."/>
            <person name="Ambesi-Impiombato A."/>
            <person name="Apweiler R."/>
            <person name="Aturaliya R.N."/>
            <person name="Bailey T.L."/>
            <person name="Bansal M."/>
            <person name="Baxter L."/>
            <person name="Beisel K.W."/>
            <person name="Bersano T."/>
            <person name="Bono H."/>
            <person name="Chalk A.M."/>
            <person name="Chiu K.P."/>
            <person name="Choudhary V."/>
            <person name="Christoffels A."/>
            <person name="Clutterbuck D.R."/>
            <person name="Crowe M.L."/>
            <person name="Dalla E."/>
            <person name="Dalrymple B.P."/>
            <person name="de Bono B."/>
            <person name="Della Gatta G."/>
            <person name="di Bernardo D."/>
            <person name="Down T."/>
            <person name="Engstrom P."/>
            <person name="Fagiolini M."/>
            <person name="Faulkner G."/>
            <person name="Fletcher C.F."/>
            <person name="Fukushima T."/>
            <person name="Furuno M."/>
            <person name="Futaki S."/>
            <person name="Gariboldi M."/>
            <person name="Georgii-Hemming P."/>
            <person name="Gingeras T.R."/>
            <person name="Gojobori T."/>
            <person name="Green R.E."/>
            <person name="Gustincich S."/>
            <person name="Harbers M."/>
            <person name="Hayashi Y."/>
            <person name="Hensch T.K."/>
            <person name="Hirokawa N."/>
            <person name="Hill D."/>
            <person name="Huminiecki L."/>
            <person name="Iacono M."/>
            <person name="Ikeo K."/>
            <person name="Iwama A."/>
            <person name="Ishikawa T."/>
            <person name="Jakt M."/>
            <person name="Kanapin A."/>
            <person name="Katoh M."/>
            <person name="Kawasawa Y."/>
            <person name="Kelso J."/>
            <person name="Kitamura H."/>
            <person name="Kitano H."/>
            <person name="Kollias G."/>
            <person name="Krishnan S.P."/>
            <person name="Kruger A."/>
            <person name="Kummerfeld S.K."/>
            <person name="Kurochkin I.V."/>
            <person name="Lareau L.F."/>
            <person name="Lazarevic D."/>
            <person name="Lipovich L."/>
            <person name="Liu J."/>
            <person name="Liuni S."/>
            <person name="McWilliam S."/>
            <person name="Madan Babu M."/>
            <person name="Madera M."/>
            <person name="Marchionni L."/>
            <person name="Matsuda H."/>
            <person name="Matsuzawa S."/>
            <person name="Miki H."/>
            <person name="Mignone F."/>
            <person name="Miyake S."/>
            <person name="Morris K."/>
            <person name="Mottagui-Tabar S."/>
            <person name="Mulder N."/>
            <person name="Nakano N."/>
            <person name="Nakauchi H."/>
            <person name="Ng P."/>
            <person name="Nilsson R."/>
            <person name="Nishiguchi S."/>
            <person name="Nishikawa S."/>
            <person name="Nori F."/>
            <person name="Ohara O."/>
            <person name="Okazaki Y."/>
            <person name="Orlando V."/>
            <person name="Pang K.C."/>
            <person name="Pavan W.J."/>
            <person name="Pavesi G."/>
            <person name="Pesole G."/>
            <person name="Petrovsky N."/>
            <person name="Piazza S."/>
            <person name="Reed J."/>
            <person name="Reid J.F."/>
            <person name="Ring B.Z."/>
            <person name="Ringwald M."/>
            <person name="Rost B."/>
            <person name="Ruan Y."/>
            <person name="Salzberg S.L."/>
            <person name="Sandelin A."/>
            <person name="Schneider C."/>
            <person name="Schoenbach C."/>
            <person name="Sekiguchi K."/>
            <person name="Semple C.A."/>
            <person name="Seno S."/>
            <person name="Sessa L."/>
            <person name="Sheng Y."/>
            <person name="Shibata Y."/>
            <person name="Shimada H."/>
            <person name="Shimada K."/>
            <person name="Silva D."/>
            <person name="Sinclair B."/>
            <person name="Sperling S."/>
            <person name="Stupka E."/>
            <person name="Sugiura K."/>
            <person name="Sultana R."/>
            <person name="Takenaka Y."/>
            <person name="Taki K."/>
            <person name="Tammoja K."/>
            <person name="Tan S.L."/>
            <person name="Tang S."/>
            <person name="Taylor M.S."/>
            <person name="Tegner J."/>
            <person name="Teichmann S.A."/>
            <person name="Ueda H.R."/>
            <person name="van Nimwegen E."/>
            <person name="Verardo R."/>
            <person name="Wei C.L."/>
            <person name="Yagi K."/>
            <person name="Yamanishi H."/>
            <person name="Zabarovsky E."/>
            <person name="Zhu S."/>
            <person name="Zimmer A."/>
            <person name="Hide W."/>
            <person name="Bult C."/>
            <person name="Grimmond S.M."/>
            <person name="Teasdale R.D."/>
            <person name="Liu E.T."/>
            <person name="Brusic V."/>
            <person name="Quackenbush J."/>
            <person name="Wahlestedt C."/>
            <person name="Mattick J.S."/>
            <person name="Hume D.A."/>
            <person name="Kai C."/>
            <person name="Sasaki D."/>
            <person name="Tomaru Y."/>
            <person name="Fukuda S."/>
            <person name="Kanamori-Katayama M."/>
            <person name="Suzuki M."/>
            <person name="Aoki J."/>
            <person name="Arakawa T."/>
            <person name="Iida J."/>
            <person name="Imamura K."/>
            <person name="Itoh M."/>
            <person name="Kato T."/>
            <person name="Kawaji H."/>
            <person name="Kawagashira N."/>
            <person name="Kawashima T."/>
            <person name="Kojima M."/>
            <person name="Kondo S."/>
            <person name="Konno H."/>
            <person name="Nakano K."/>
            <person name="Ninomiya N."/>
            <person name="Nishio T."/>
            <person name="Okada M."/>
            <person name="Plessy C."/>
            <person name="Shibata K."/>
            <person name="Shiraki T."/>
            <person name="Suzuki S."/>
            <person name="Tagami M."/>
            <person name="Waki K."/>
            <person name="Watahiki A."/>
            <person name="Okamura-Oho Y."/>
            <person name="Suzuki H."/>
            <person name="Kawai J."/>
            <person name="Hayashizaki Y."/>
        </authorList>
    </citation>
    <scope>NUCLEOTIDE SEQUENCE [LARGE SCALE MRNA]</scope>
    <source>
        <strain>C57BL/6J</strain>
        <tissue>Spinal ganglion</tissue>
    </source>
</reference>
<keyword id="KW-0539">Nucleus</keyword>
<keyword id="KW-0597">Phosphoprotein</keyword>
<keyword id="KW-1185">Reference proteome</keyword>
<proteinExistence type="evidence at transcript level"/>
<protein>
    <recommendedName>
        <fullName evidence="4">Nuclear protein AMMECR1</fullName>
    </recommendedName>
    <alternativeName>
        <fullName>AMME syndrome candidate gene 1 protein homolog</fullName>
    </alternativeName>
</protein>
<sequence length="344" mass="36031">MAAGCCGVKKQKLSSSPPSGSGGGGGASSSSHCSGESQCRAGELGLGGAGTRLNGLGGLSGGGGSGGGGGCPLSPPQGCGGGGGGGGGGGSGSGGGGISLSPPLSCGVGTLLSTPAAATASSPSSSSSSPGSRKMVVSAEMCCFCFDVLYCHLYGYQQPRTPRFTNEPYPLFVTWKIGRDKRLRGCIGTFSAMNLHSGLREYTLTSALKDSRFPPMTRDELPRLFCSVSLLTNFEDVCDYLDWEVGVHGIRIEFINEKGSKRTATYLPEVAKEQGWDHIQTIDSLLRKGGYKAPITNEFRKTIKLTRYRSEKMTLSYAEYLAHRQHHHFQNGIGHPLPPYNHYS</sequence>
<dbReference type="EMBL" id="AJ243485">
    <property type="protein sequence ID" value="CAB95767.1"/>
    <property type="molecule type" value="mRNA"/>
</dbReference>
<dbReference type="EMBL" id="AK051736">
    <property type="protein sequence ID" value="BAC34745.1"/>
    <property type="molecule type" value="mRNA"/>
</dbReference>
<dbReference type="CCDS" id="CCDS30452.1"/>
<dbReference type="RefSeq" id="NP_062369.1">
    <property type="nucleotide sequence ID" value="NM_019496.4"/>
</dbReference>
<dbReference type="SMR" id="Q9JHT5"/>
<dbReference type="BioGRID" id="207799">
    <property type="interactions" value="1"/>
</dbReference>
<dbReference type="FunCoup" id="Q9JHT5">
    <property type="interactions" value="3597"/>
</dbReference>
<dbReference type="STRING" id="10090.ENSMUSP00000036085"/>
<dbReference type="iPTMnet" id="Q9JHT5"/>
<dbReference type="PhosphoSitePlus" id="Q9JHT5"/>
<dbReference type="PaxDb" id="10090-ENSMUSP00000036085"/>
<dbReference type="PeptideAtlas" id="Q9JHT5"/>
<dbReference type="ProteomicsDB" id="296029"/>
<dbReference type="Pumba" id="Q9JHT5"/>
<dbReference type="Antibodypedia" id="29496">
    <property type="antibodies" value="128 antibodies from 23 providers"/>
</dbReference>
<dbReference type="DNASU" id="56068"/>
<dbReference type="Ensembl" id="ENSMUST00000041317.3">
    <property type="protein sequence ID" value="ENSMUSP00000036085.3"/>
    <property type="gene ID" value="ENSMUSG00000042225.4"/>
</dbReference>
<dbReference type="GeneID" id="56068"/>
<dbReference type="KEGG" id="mmu:56068"/>
<dbReference type="UCSC" id="uc009umc.1">
    <property type="organism name" value="mouse"/>
</dbReference>
<dbReference type="AGR" id="MGI:1860206"/>
<dbReference type="CTD" id="9949"/>
<dbReference type="MGI" id="MGI:1860206">
    <property type="gene designation" value="Ammecr1"/>
</dbReference>
<dbReference type="VEuPathDB" id="HostDB:ENSMUSG00000042225"/>
<dbReference type="eggNOG" id="KOG3274">
    <property type="taxonomic scope" value="Eukaryota"/>
</dbReference>
<dbReference type="GeneTree" id="ENSGT00390000010397"/>
<dbReference type="HOGENOM" id="CLU_052828_0_0_1"/>
<dbReference type="InParanoid" id="Q9JHT5"/>
<dbReference type="OMA" id="YAEYIGH"/>
<dbReference type="OrthoDB" id="24630at2759"/>
<dbReference type="PhylomeDB" id="Q9JHT5"/>
<dbReference type="TreeFam" id="TF314680"/>
<dbReference type="BioGRID-ORCS" id="56068">
    <property type="hits" value="5 hits in 76 CRISPR screens"/>
</dbReference>
<dbReference type="ChiTaRS" id="Ammecr1">
    <property type="organism name" value="mouse"/>
</dbReference>
<dbReference type="PRO" id="PR:Q9JHT5"/>
<dbReference type="Proteomes" id="UP000000589">
    <property type="component" value="Chromosome X"/>
</dbReference>
<dbReference type="RNAct" id="Q9JHT5">
    <property type="molecule type" value="protein"/>
</dbReference>
<dbReference type="Bgee" id="ENSMUSG00000042225">
    <property type="expression patterns" value="Expressed in hair follicle and 127 other cell types or tissues"/>
</dbReference>
<dbReference type="GO" id="GO:0005739">
    <property type="term" value="C:mitochondrion"/>
    <property type="evidence" value="ECO:0007669"/>
    <property type="project" value="Ensembl"/>
</dbReference>
<dbReference type="GO" id="GO:0005654">
    <property type="term" value="C:nucleoplasm"/>
    <property type="evidence" value="ECO:0007669"/>
    <property type="project" value="Ensembl"/>
</dbReference>
<dbReference type="GO" id="GO:0005634">
    <property type="term" value="C:nucleus"/>
    <property type="evidence" value="ECO:0000250"/>
    <property type="project" value="UniProtKB"/>
</dbReference>
<dbReference type="FunFam" id="3.30.700.20:FF:000001">
    <property type="entry name" value="AMME syndrome candidate gene 1"/>
    <property type="match status" value="1"/>
</dbReference>
<dbReference type="Gene3D" id="3.30.700.20">
    <property type="entry name" value="Hypothetical protein ph0010, domain 1"/>
    <property type="match status" value="1"/>
</dbReference>
<dbReference type="InterPro" id="IPR023473">
    <property type="entry name" value="AMMECR1"/>
</dbReference>
<dbReference type="InterPro" id="IPR036071">
    <property type="entry name" value="AMMECR1_dom_sf"/>
</dbReference>
<dbReference type="InterPro" id="IPR002733">
    <property type="entry name" value="AMMECR1_domain"/>
</dbReference>
<dbReference type="InterPro" id="IPR027485">
    <property type="entry name" value="AMMECR1_N"/>
</dbReference>
<dbReference type="NCBIfam" id="TIGR00296">
    <property type="entry name" value="TIGR00296 family protein"/>
    <property type="match status" value="1"/>
</dbReference>
<dbReference type="PANTHER" id="PTHR13016">
    <property type="entry name" value="AMMECR1 HOMOLOG"/>
    <property type="match status" value="1"/>
</dbReference>
<dbReference type="PANTHER" id="PTHR13016:SF2">
    <property type="entry name" value="NUCLEAR PROTEIN AMMECR1"/>
    <property type="match status" value="1"/>
</dbReference>
<dbReference type="Pfam" id="PF01871">
    <property type="entry name" value="AMMECR1"/>
    <property type="match status" value="1"/>
</dbReference>
<dbReference type="SUPFAM" id="SSF143447">
    <property type="entry name" value="AMMECR1-like"/>
    <property type="match status" value="1"/>
</dbReference>
<dbReference type="PROSITE" id="PS51112">
    <property type="entry name" value="AMMECR1"/>
    <property type="match status" value="1"/>
</dbReference>
<evidence type="ECO:0000250" key="1">
    <source>
        <dbReference type="UniProtKB" id="Q9Y4X0"/>
    </source>
</evidence>
<evidence type="ECO:0000255" key="2">
    <source>
        <dbReference type="PROSITE-ProRule" id="PRU00467"/>
    </source>
</evidence>
<evidence type="ECO:0000256" key="3">
    <source>
        <dbReference type="SAM" id="MobiDB-lite"/>
    </source>
</evidence>
<evidence type="ECO:0000305" key="4"/>